<protein>
    <recommendedName>
        <fullName evidence="1">Bis(5'-nucleosyl)-tetraphosphatase, symmetrical</fullName>
        <ecNumber evidence="1">3.6.1.41</ecNumber>
    </recommendedName>
    <alternativeName>
        <fullName evidence="1">Ap4A hydrolase</fullName>
    </alternativeName>
    <alternativeName>
        <fullName evidence="1">Diadenosine 5',5'''-P1,P4-tetraphosphate pyrophosphohydrolase</fullName>
    </alternativeName>
    <alternativeName>
        <fullName evidence="1">Diadenosine tetraphosphatase</fullName>
    </alternativeName>
</protein>
<name>APAH_HAMD5</name>
<accession>C4K4K8</accession>
<sequence length="275" mass="31702">MSNYLIGDVHGCFDELKALLAKVNFDKEKDTLWLTGDLISRGPQSLKVLRYARSLGKALRMVLGNHDLHLLAIHAGMRKNNPKDHLTSLLAAPDVDQLMDWLRQQPLLQIDDDLKLIMTHAGIYPKWDKKTAQTCAQEIEVALRGNRLPLFLDRSHTQTPHSWSPKLKGDARLQFITNALTRMRYCFSDGSLDMTHKEIPEKVQDDLYPWFLLPRLLEPEYAITFGHWSALKGKGTPKNIYALDTGCCWGNELTLLHWEEKRYFIQPAYKCENEF</sequence>
<gene>
    <name evidence="1" type="primary">apaH</name>
    <name type="ordered locus">HDEF_0774</name>
</gene>
<dbReference type="EC" id="3.6.1.41" evidence="1"/>
<dbReference type="EMBL" id="CP001277">
    <property type="protein sequence ID" value="ACQ67501.1"/>
    <property type="molecule type" value="Genomic_DNA"/>
</dbReference>
<dbReference type="RefSeq" id="WP_015873321.1">
    <property type="nucleotide sequence ID" value="NC_012751.1"/>
</dbReference>
<dbReference type="SMR" id="C4K4K8"/>
<dbReference type="STRING" id="572265.HDEF_0774"/>
<dbReference type="GeneID" id="66260616"/>
<dbReference type="KEGG" id="hde:HDEF_0774"/>
<dbReference type="eggNOG" id="COG0639">
    <property type="taxonomic scope" value="Bacteria"/>
</dbReference>
<dbReference type="HOGENOM" id="CLU_056184_2_0_6"/>
<dbReference type="Proteomes" id="UP000002334">
    <property type="component" value="Chromosome"/>
</dbReference>
<dbReference type="GO" id="GO:0008803">
    <property type="term" value="F:bis(5'-nucleosyl)-tetraphosphatase (symmetrical) activity"/>
    <property type="evidence" value="ECO:0007669"/>
    <property type="project" value="UniProtKB-UniRule"/>
</dbReference>
<dbReference type="CDD" id="cd07422">
    <property type="entry name" value="MPP_ApaH"/>
    <property type="match status" value="1"/>
</dbReference>
<dbReference type="Gene3D" id="3.60.21.10">
    <property type="match status" value="1"/>
</dbReference>
<dbReference type="HAMAP" id="MF_00199">
    <property type="entry name" value="ApaH"/>
    <property type="match status" value="1"/>
</dbReference>
<dbReference type="InterPro" id="IPR004617">
    <property type="entry name" value="ApaH"/>
</dbReference>
<dbReference type="InterPro" id="IPR004843">
    <property type="entry name" value="Calcineurin-like_PHP_ApaH"/>
</dbReference>
<dbReference type="InterPro" id="IPR029052">
    <property type="entry name" value="Metallo-depent_PP-like"/>
</dbReference>
<dbReference type="NCBIfam" id="TIGR00668">
    <property type="entry name" value="apaH"/>
    <property type="match status" value="1"/>
</dbReference>
<dbReference type="NCBIfam" id="NF001204">
    <property type="entry name" value="PRK00166.1"/>
    <property type="match status" value="1"/>
</dbReference>
<dbReference type="PANTHER" id="PTHR40942">
    <property type="match status" value="1"/>
</dbReference>
<dbReference type="PANTHER" id="PTHR40942:SF4">
    <property type="entry name" value="CYTOCHROME C5"/>
    <property type="match status" value="1"/>
</dbReference>
<dbReference type="Pfam" id="PF00149">
    <property type="entry name" value="Metallophos"/>
    <property type="match status" value="1"/>
</dbReference>
<dbReference type="PIRSF" id="PIRSF000903">
    <property type="entry name" value="B5n-ttraPtase_sm"/>
    <property type="match status" value="1"/>
</dbReference>
<dbReference type="SUPFAM" id="SSF56300">
    <property type="entry name" value="Metallo-dependent phosphatases"/>
    <property type="match status" value="1"/>
</dbReference>
<proteinExistence type="inferred from homology"/>
<keyword id="KW-0378">Hydrolase</keyword>
<evidence type="ECO:0000255" key="1">
    <source>
        <dbReference type="HAMAP-Rule" id="MF_00199"/>
    </source>
</evidence>
<comment type="function">
    <text evidence="1">Hydrolyzes diadenosine 5',5'''-P1,P4-tetraphosphate to yield ADP.</text>
</comment>
<comment type="catalytic activity">
    <reaction evidence="1">
        <text>P(1),P(4)-bis(5'-adenosyl) tetraphosphate + H2O = 2 ADP + 2 H(+)</text>
        <dbReference type="Rhea" id="RHEA:24252"/>
        <dbReference type="ChEBI" id="CHEBI:15377"/>
        <dbReference type="ChEBI" id="CHEBI:15378"/>
        <dbReference type="ChEBI" id="CHEBI:58141"/>
        <dbReference type="ChEBI" id="CHEBI:456216"/>
        <dbReference type="EC" id="3.6.1.41"/>
    </reaction>
</comment>
<comment type="similarity">
    <text evidence="1">Belongs to the Ap4A hydrolase family.</text>
</comment>
<organism>
    <name type="scientific">Hamiltonella defensa subsp. Acyrthosiphon pisum (strain 5AT)</name>
    <dbReference type="NCBI Taxonomy" id="572265"/>
    <lineage>
        <taxon>Bacteria</taxon>
        <taxon>Pseudomonadati</taxon>
        <taxon>Pseudomonadota</taxon>
        <taxon>Gammaproteobacteria</taxon>
        <taxon>Enterobacterales</taxon>
        <taxon>Enterobacteriaceae</taxon>
        <taxon>aphid secondary symbionts</taxon>
        <taxon>Candidatus Hamiltonella</taxon>
    </lineage>
</organism>
<feature type="chain" id="PRO_1000204086" description="Bis(5'-nucleosyl)-tetraphosphatase, symmetrical">
    <location>
        <begin position="1"/>
        <end position="275"/>
    </location>
</feature>
<reference key="1">
    <citation type="journal article" date="2009" name="Proc. Natl. Acad. Sci. U.S.A.">
        <title>Hamiltonella defensa, genome evolution of protective bacterial endosymbiont from pathogenic ancestors.</title>
        <authorList>
            <person name="Degnan P.H."/>
            <person name="Yu Y."/>
            <person name="Sisneros N."/>
            <person name="Wing R.A."/>
            <person name="Moran N.A."/>
        </authorList>
    </citation>
    <scope>NUCLEOTIDE SEQUENCE [LARGE SCALE GENOMIC DNA]</scope>
    <source>
        <strain>5AT</strain>
    </source>
</reference>